<comment type="function">
    <text evidence="1">Plays an important role in the de novo pathway of purine nucleotide biosynthesis. Catalyzes the first committed step in the biosynthesis of AMP from IMP.</text>
</comment>
<comment type="catalytic activity">
    <reaction evidence="1">
        <text>IMP + L-aspartate + GTP = N(6)-(1,2-dicarboxyethyl)-AMP + GDP + phosphate + 2 H(+)</text>
        <dbReference type="Rhea" id="RHEA:15753"/>
        <dbReference type="ChEBI" id="CHEBI:15378"/>
        <dbReference type="ChEBI" id="CHEBI:29991"/>
        <dbReference type="ChEBI" id="CHEBI:37565"/>
        <dbReference type="ChEBI" id="CHEBI:43474"/>
        <dbReference type="ChEBI" id="CHEBI:57567"/>
        <dbReference type="ChEBI" id="CHEBI:58053"/>
        <dbReference type="ChEBI" id="CHEBI:58189"/>
        <dbReference type="EC" id="6.3.4.4"/>
    </reaction>
</comment>
<comment type="cofactor">
    <cofactor evidence="1">
        <name>Mg(2+)</name>
        <dbReference type="ChEBI" id="CHEBI:18420"/>
    </cofactor>
    <text evidence="1">Binds 1 Mg(2+) ion per subunit.</text>
</comment>
<comment type="pathway">
    <text evidence="1">Purine metabolism; AMP biosynthesis via de novo pathway; AMP from IMP: step 1/2.</text>
</comment>
<comment type="subunit">
    <text evidence="1">Homodimer.</text>
</comment>
<comment type="subcellular location">
    <subcellularLocation>
        <location evidence="1">Cytoplasm</location>
    </subcellularLocation>
</comment>
<comment type="similarity">
    <text evidence="1">Belongs to the adenylosuccinate synthetase family.</text>
</comment>
<name>PURA_NITWN</name>
<evidence type="ECO:0000255" key="1">
    <source>
        <dbReference type="HAMAP-Rule" id="MF_00011"/>
    </source>
</evidence>
<protein>
    <recommendedName>
        <fullName evidence="1">Adenylosuccinate synthetase</fullName>
        <shortName evidence="1">AMPSase</shortName>
        <shortName evidence="1">AdSS</shortName>
        <ecNumber evidence="1">6.3.4.4</ecNumber>
    </recommendedName>
    <alternativeName>
        <fullName evidence="1">IMP--aspartate ligase</fullName>
    </alternativeName>
</protein>
<keyword id="KW-0963">Cytoplasm</keyword>
<keyword id="KW-0342">GTP-binding</keyword>
<keyword id="KW-0436">Ligase</keyword>
<keyword id="KW-0460">Magnesium</keyword>
<keyword id="KW-0479">Metal-binding</keyword>
<keyword id="KW-0547">Nucleotide-binding</keyword>
<keyword id="KW-0658">Purine biosynthesis</keyword>
<keyword id="KW-1185">Reference proteome</keyword>
<dbReference type="EC" id="6.3.4.4" evidence="1"/>
<dbReference type="EMBL" id="CP000115">
    <property type="protein sequence ID" value="ABA06215.1"/>
    <property type="molecule type" value="Genomic_DNA"/>
</dbReference>
<dbReference type="RefSeq" id="WP_011316137.1">
    <property type="nucleotide sequence ID" value="NC_007406.1"/>
</dbReference>
<dbReference type="SMR" id="Q3SNC6"/>
<dbReference type="STRING" id="323098.Nwi_2965"/>
<dbReference type="KEGG" id="nwi:Nwi_2965"/>
<dbReference type="eggNOG" id="COG0104">
    <property type="taxonomic scope" value="Bacteria"/>
</dbReference>
<dbReference type="HOGENOM" id="CLU_029848_0_0_5"/>
<dbReference type="OrthoDB" id="9807553at2"/>
<dbReference type="UniPathway" id="UPA00075">
    <property type="reaction ID" value="UER00335"/>
</dbReference>
<dbReference type="Proteomes" id="UP000002531">
    <property type="component" value="Chromosome"/>
</dbReference>
<dbReference type="GO" id="GO:0005737">
    <property type="term" value="C:cytoplasm"/>
    <property type="evidence" value="ECO:0007669"/>
    <property type="project" value="UniProtKB-SubCell"/>
</dbReference>
<dbReference type="GO" id="GO:0004019">
    <property type="term" value="F:adenylosuccinate synthase activity"/>
    <property type="evidence" value="ECO:0007669"/>
    <property type="project" value="UniProtKB-UniRule"/>
</dbReference>
<dbReference type="GO" id="GO:0005525">
    <property type="term" value="F:GTP binding"/>
    <property type="evidence" value="ECO:0007669"/>
    <property type="project" value="UniProtKB-UniRule"/>
</dbReference>
<dbReference type="GO" id="GO:0000287">
    <property type="term" value="F:magnesium ion binding"/>
    <property type="evidence" value="ECO:0007669"/>
    <property type="project" value="UniProtKB-UniRule"/>
</dbReference>
<dbReference type="GO" id="GO:0044208">
    <property type="term" value="P:'de novo' AMP biosynthetic process"/>
    <property type="evidence" value="ECO:0007669"/>
    <property type="project" value="UniProtKB-UniRule"/>
</dbReference>
<dbReference type="GO" id="GO:0046040">
    <property type="term" value="P:IMP metabolic process"/>
    <property type="evidence" value="ECO:0007669"/>
    <property type="project" value="TreeGrafter"/>
</dbReference>
<dbReference type="CDD" id="cd03108">
    <property type="entry name" value="AdSS"/>
    <property type="match status" value="1"/>
</dbReference>
<dbReference type="FunFam" id="1.10.300.10:FF:000001">
    <property type="entry name" value="Adenylosuccinate synthetase"/>
    <property type="match status" value="1"/>
</dbReference>
<dbReference type="FunFam" id="3.90.170.10:FF:000001">
    <property type="entry name" value="Adenylosuccinate synthetase"/>
    <property type="match status" value="1"/>
</dbReference>
<dbReference type="Gene3D" id="3.40.440.10">
    <property type="entry name" value="Adenylosuccinate Synthetase, subunit A, domain 1"/>
    <property type="match status" value="1"/>
</dbReference>
<dbReference type="Gene3D" id="1.10.300.10">
    <property type="entry name" value="Adenylosuccinate Synthetase, subunit A, domain 2"/>
    <property type="match status" value="1"/>
</dbReference>
<dbReference type="Gene3D" id="3.90.170.10">
    <property type="entry name" value="Adenylosuccinate Synthetase, subunit A, domain 3"/>
    <property type="match status" value="1"/>
</dbReference>
<dbReference type="HAMAP" id="MF_00011">
    <property type="entry name" value="Adenylosucc_synth"/>
    <property type="match status" value="1"/>
</dbReference>
<dbReference type="InterPro" id="IPR018220">
    <property type="entry name" value="Adenylosuccin_syn_GTP-bd"/>
</dbReference>
<dbReference type="InterPro" id="IPR033128">
    <property type="entry name" value="Adenylosuccin_syn_Lys_AS"/>
</dbReference>
<dbReference type="InterPro" id="IPR042109">
    <property type="entry name" value="Adenylosuccinate_synth_dom1"/>
</dbReference>
<dbReference type="InterPro" id="IPR042110">
    <property type="entry name" value="Adenylosuccinate_synth_dom2"/>
</dbReference>
<dbReference type="InterPro" id="IPR042111">
    <property type="entry name" value="Adenylosuccinate_synth_dom3"/>
</dbReference>
<dbReference type="InterPro" id="IPR001114">
    <property type="entry name" value="Adenylosuccinate_synthetase"/>
</dbReference>
<dbReference type="InterPro" id="IPR027417">
    <property type="entry name" value="P-loop_NTPase"/>
</dbReference>
<dbReference type="NCBIfam" id="NF002223">
    <property type="entry name" value="PRK01117.1"/>
    <property type="match status" value="1"/>
</dbReference>
<dbReference type="NCBIfam" id="TIGR00184">
    <property type="entry name" value="purA"/>
    <property type="match status" value="1"/>
</dbReference>
<dbReference type="PANTHER" id="PTHR11846">
    <property type="entry name" value="ADENYLOSUCCINATE SYNTHETASE"/>
    <property type="match status" value="1"/>
</dbReference>
<dbReference type="PANTHER" id="PTHR11846:SF0">
    <property type="entry name" value="ADENYLOSUCCINATE SYNTHETASE"/>
    <property type="match status" value="1"/>
</dbReference>
<dbReference type="Pfam" id="PF00709">
    <property type="entry name" value="Adenylsucc_synt"/>
    <property type="match status" value="1"/>
</dbReference>
<dbReference type="SMART" id="SM00788">
    <property type="entry name" value="Adenylsucc_synt"/>
    <property type="match status" value="1"/>
</dbReference>
<dbReference type="SUPFAM" id="SSF52540">
    <property type="entry name" value="P-loop containing nucleoside triphosphate hydrolases"/>
    <property type="match status" value="1"/>
</dbReference>
<dbReference type="PROSITE" id="PS01266">
    <property type="entry name" value="ADENYLOSUCCIN_SYN_1"/>
    <property type="match status" value="1"/>
</dbReference>
<dbReference type="PROSITE" id="PS00513">
    <property type="entry name" value="ADENYLOSUCCIN_SYN_2"/>
    <property type="match status" value="1"/>
</dbReference>
<gene>
    <name evidence="1" type="primary">purA</name>
    <name type="ordered locus">Nwi_2965</name>
</gene>
<feature type="chain" id="PRO_0000224297" description="Adenylosuccinate synthetase">
    <location>
        <begin position="1"/>
        <end position="430"/>
    </location>
</feature>
<feature type="active site" description="Proton acceptor" evidence="1">
    <location>
        <position position="13"/>
    </location>
</feature>
<feature type="active site" description="Proton donor" evidence="1">
    <location>
        <position position="41"/>
    </location>
</feature>
<feature type="binding site" evidence="1">
    <location>
        <begin position="12"/>
        <end position="18"/>
    </location>
    <ligand>
        <name>GTP</name>
        <dbReference type="ChEBI" id="CHEBI:37565"/>
    </ligand>
</feature>
<feature type="binding site" description="in other chain" evidence="1">
    <location>
        <begin position="13"/>
        <end position="16"/>
    </location>
    <ligand>
        <name>IMP</name>
        <dbReference type="ChEBI" id="CHEBI:58053"/>
        <note>ligand shared between dimeric partners</note>
    </ligand>
</feature>
<feature type="binding site" evidence="1">
    <location>
        <position position="13"/>
    </location>
    <ligand>
        <name>Mg(2+)</name>
        <dbReference type="ChEBI" id="CHEBI:18420"/>
    </ligand>
</feature>
<feature type="binding site" description="in other chain" evidence="1">
    <location>
        <begin position="38"/>
        <end position="41"/>
    </location>
    <ligand>
        <name>IMP</name>
        <dbReference type="ChEBI" id="CHEBI:58053"/>
        <note>ligand shared between dimeric partners</note>
    </ligand>
</feature>
<feature type="binding site" evidence="1">
    <location>
        <begin position="40"/>
        <end position="42"/>
    </location>
    <ligand>
        <name>GTP</name>
        <dbReference type="ChEBI" id="CHEBI:37565"/>
    </ligand>
</feature>
<feature type="binding site" evidence="1">
    <location>
        <position position="40"/>
    </location>
    <ligand>
        <name>Mg(2+)</name>
        <dbReference type="ChEBI" id="CHEBI:18420"/>
    </ligand>
</feature>
<feature type="binding site" description="in other chain" evidence="1">
    <location>
        <position position="130"/>
    </location>
    <ligand>
        <name>IMP</name>
        <dbReference type="ChEBI" id="CHEBI:58053"/>
        <note>ligand shared between dimeric partners</note>
    </ligand>
</feature>
<feature type="binding site" evidence="1">
    <location>
        <position position="144"/>
    </location>
    <ligand>
        <name>IMP</name>
        <dbReference type="ChEBI" id="CHEBI:58053"/>
        <note>ligand shared between dimeric partners</note>
    </ligand>
</feature>
<feature type="binding site" description="in other chain" evidence="1">
    <location>
        <position position="224"/>
    </location>
    <ligand>
        <name>IMP</name>
        <dbReference type="ChEBI" id="CHEBI:58053"/>
        <note>ligand shared between dimeric partners</note>
    </ligand>
</feature>
<feature type="binding site" description="in other chain" evidence="1">
    <location>
        <position position="239"/>
    </location>
    <ligand>
        <name>IMP</name>
        <dbReference type="ChEBI" id="CHEBI:58053"/>
        <note>ligand shared between dimeric partners</note>
    </ligand>
</feature>
<feature type="binding site" evidence="1">
    <location>
        <begin position="299"/>
        <end position="305"/>
    </location>
    <ligand>
        <name>substrate</name>
    </ligand>
</feature>
<feature type="binding site" description="in other chain" evidence="1">
    <location>
        <position position="303"/>
    </location>
    <ligand>
        <name>IMP</name>
        <dbReference type="ChEBI" id="CHEBI:58053"/>
        <note>ligand shared between dimeric partners</note>
    </ligand>
</feature>
<feature type="binding site" evidence="1">
    <location>
        <position position="305"/>
    </location>
    <ligand>
        <name>GTP</name>
        <dbReference type="ChEBI" id="CHEBI:37565"/>
    </ligand>
</feature>
<feature type="binding site" evidence="1">
    <location>
        <begin position="331"/>
        <end position="333"/>
    </location>
    <ligand>
        <name>GTP</name>
        <dbReference type="ChEBI" id="CHEBI:37565"/>
    </ligand>
</feature>
<feature type="binding site" evidence="1">
    <location>
        <begin position="413"/>
        <end position="415"/>
    </location>
    <ligand>
        <name>GTP</name>
        <dbReference type="ChEBI" id="CHEBI:37565"/>
    </ligand>
</feature>
<reference key="1">
    <citation type="journal article" date="2006" name="Appl. Environ. Microbiol.">
        <title>Genome sequence of the chemolithoautotrophic nitrite-oxidizing bacterium Nitrobacter winogradskyi Nb-255.</title>
        <authorList>
            <person name="Starkenburg S.R."/>
            <person name="Chain P.S.G."/>
            <person name="Sayavedra-Soto L.A."/>
            <person name="Hauser L."/>
            <person name="Land M.L."/>
            <person name="Larimer F.W."/>
            <person name="Malfatti S.A."/>
            <person name="Klotz M.G."/>
            <person name="Bottomley P.J."/>
            <person name="Arp D.J."/>
            <person name="Hickey W.J."/>
        </authorList>
    </citation>
    <scope>NUCLEOTIDE SEQUENCE [LARGE SCALE GENOMIC DNA]</scope>
    <source>
        <strain>ATCC 25391 / DSM 10237 / CIP 104748 / NCIMB 11846 / Nb-255</strain>
    </source>
</reference>
<sequence length="430" mass="46636">MTNVVVVGAQWGDEGKGKIVDWLSEQADIVVRFQGGHNAGHTLVIDGNTYKLALLPSGVVRSSKLSVIGNGVVFDPQAFVNEVEKLKEQGVKVGPDNLRVAENVTLILPLHRELDSLRENASAATAIGTTQRGIGPAYEDKVGRRAIRLMDLADPQTLPHKIERLLAHHNALRRGHGIAEVDSGALLRDLAAIAPRVLPYADSVWNLLDHKRREGKRILFEGAQGALLDVDHGTYPYVTSSNTVAAQAATGTGMGPSALGYVLGICKAYTTRVGQGPFPTELNDEIGELIGQRGKEFGVNTGRKRRCGWFDAMLVRQTVRTSGIHGLALTKLDILDGFDTIQVCTGYRLDGKEIDHLPAGEGAQARIEPVYETVEGWKEPTANARSWADLPAQAIKYVRRIEELVGCPVALLSTSPEREDTILVQNPFEA</sequence>
<accession>Q3SNC6</accession>
<proteinExistence type="inferred from homology"/>
<organism>
    <name type="scientific">Nitrobacter winogradskyi (strain ATCC 25391 / DSM 10237 / CIP 104748 / NCIMB 11846 / Nb-255)</name>
    <dbReference type="NCBI Taxonomy" id="323098"/>
    <lineage>
        <taxon>Bacteria</taxon>
        <taxon>Pseudomonadati</taxon>
        <taxon>Pseudomonadota</taxon>
        <taxon>Alphaproteobacteria</taxon>
        <taxon>Hyphomicrobiales</taxon>
        <taxon>Nitrobacteraceae</taxon>
        <taxon>Nitrobacter</taxon>
    </lineage>
</organism>